<evidence type="ECO:0000250" key="1"/>
<evidence type="ECO:0000269" key="2">
    <source>
    </source>
</evidence>
<evidence type="ECO:0000269" key="3">
    <source>
    </source>
</evidence>
<evidence type="ECO:0000269" key="4">
    <source>
    </source>
</evidence>
<evidence type="ECO:0000269" key="5">
    <source>
    </source>
</evidence>
<evidence type="ECO:0000269" key="6">
    <source>
    </source>
</evidence>
<evidence type="ECO:0000305" key="7"/>
<evidence type="ECO:0007829" key="8">
    <source>
        <dbReference type="PDB" id="1LEM"/>
    </source>
</evidence>
<evidence type="ECO:0007829" key="9">
    <source>
        <dbReference type="PDB" id="1LEN"/>
    </source>
</evidence>
<evidence type="ECO:0007829" key="10">
    <source>
        <dbReference type="PDB" id="1LES"/>
    </source>
</evidence>
<reference key="1">
    <citation type="submission" date="2005-04" db="EMBL/GenBank/DDBJ databases">
        <authorList>
            <person name="Qureshi I.A."/>
            <person name="Koundal K.R."/>
        </authorList>
    </citation>
    <scope>NUCLEOTIDE SEQUENCE [MRNA]</scope>
    <scope>NUCLEOTIDE SEQUENCE [GENOMIC DNA] OF 47-275</scope>
</reference>
<reference key="2">
    <citation type="journal article" date="1981" name="J. Biol. Chem.">
        <title>The structure of the lentil (Lens culinaris) lectin. Amino acid sequence determination and prediction of the secondary structure.</title>
        <authorList>
            <person name="Foriers A."/>
            <person name="Lebrun E."/>
            <person name="van Rapenbusch R."/>
            <person name="de Neve R."/>
            <person name="Strosberg A.D."/>
        </authorList>
    </citation>
    <scope>PROTEIN SEQUENCE OF 31-187</scope>
    <source>
        <tissue>Seed</tissue>
    </source>
</reference>
<reference key="3">
    <citation type="journal article" date="1978" name="Proc. Natl. Acad. Sci. U.S.A.">
        <title>Common ancestor for concanavalin A and lentil lectin?</title>
        <authorList>
            <person name="Foriers A."/>
            <person name="de Neve R."/>
            <person name="Kanarek L."/>
            <person name="Strosberg A.D."/>
        </authorList>
    </citation>
    <scope>PROTEIN SEQUENCE OF 218-269</scope>
</reference>
<reference key="4">
    <citation type="journal article" date="1993" name="Biochemistry">
        <title>Crystal structure determination and refinement at 2.3-A resolution of the lentil lectin.</title>
        <authorList>
            <person name="Loris R."/>
            <person name="Steyaert J."/>
            <person name="Maes D."/>
            <person name="Lisgarten J."/>
            <person name="Pickersgill R."/>
            <person name="Wyns L."/>
        </authorList>
    </citation>
    <scope>PARTIAL NUCLEOTIDE SEQUENCE [GENOMIC DNA]</scope>
    <scope>X-RAY CRYSTALLOGRAPHY (1.8 ANGSTROMS) OF 31-210 AND 218-269 IN COMPLEX WITH ZINC AND MANGANESE IONS</scope>
    <scope>CLEAVAGE SITE</scope>
    <source>
        <tissue>Seed</tissue>
    </source>
</reference>
<reference key="5">
    <citation type="journal article" date="1993" name="Biochemistry">
        <authorList>
            <person name="Loris R."/>
            <person name="Steyaert J."/>
            <person name="Maes D."/>
            <person name="Lisgarten J."/>
            <person name="Pickersgill R."/>
            <person name="Wyns L."/>
        </authorList>
    </citation>
    <scope>ERRATUM OF PUBMED:8364026</scope>
</reference>
<reference key="6">
    <citation type="journal article" date="1994" name="Proteins">
        <title>Structural analysis of two crystal forms of lentil lectin at 1.8 A resolution.</title>
        <authorList>
            <person name="Loris R."/>
            <person name="Van Overberge D."/>
            <person name="Dao-Thi M.H."/>
            <person name="Poortmans F."/>
            <person name="Maene N."/>
            <person name="Wyns L."/>
        </authorList>
    </citation>
    <scope>X-RAY CRYSTALLOGRAPHY (1.9 ANGSTROMS) OF 31-210 AND 218-269 IN COMPLEX WITH SUCROSE; ZINC AND MANGANESE IONS</scope>
    <scope>CLEAVAGE SITE</scope>
</reference>
<reference key="7">
    <citation type="journal article" date="1995" name="J. Biol. Chem.">
        <title>NMR, molecular modeling, and crystallographic studies of lentil lectin-sucrose interaction.</title>
        <authorList>
            <person name="Casset F."/>
            <person name="Hamelryck T."/>
            <person name="Loris R."/>
            <person name="Brisson J.R."/>
            <person name="Tellier C."/>
            <person name="Dao-Thi M.H."/>
            <person name="Wyns L."/>
            <person name="Poortmans F."/>
            <person name="Perez S."/>
            <person name="Imberty A."/>
        </authorList>
    </citation>
    <scope>X-RAY CRYSTALLOGRAPHY (1.9 ANGSTROMS) OF 31-210 AND 218-269 IN COMPLEX WITH SUCROSE; ZINC AND MANGANESE IONS</scope>
    <scope>CLEAVAGE SITE</scope>
    <source>
        <tissue>Seed</tissue>
    </source>
</reference>
<keyword id="KW-0002">3D-structure</keyword>
<keyword id="KW-0106">Calcium</keyword>
<keyword id="KW-0903">Direct protein sequencing</keyword>
<keyword id="KW-0430">Lectin</keyword>
<keyword id="KW-0464">Manganese</keyword>
<keyword id="KW-0465">Mannose-binding</keyword>
<keyword id="KW-0479">Metal-binding</keyword>
<keyword id="KW-0732">Signal</keyword>
<dbReference type="EMBL" id="AY547295">
    <property type="protein sequence ID" value="AAS55887.1"/>
    <property type="molecule type" value="Genomic_DNA"/>
</dbReference>
<dbReference type="EMBL" id="DQ005103">
    <property type="protein sequence ID" value="AAY21161.1"/>
    <property type="molecule type" value="mRNA"/>
</dbReference>
<dbReference type="PIR" id="A48694">
    <property type="entry name" value="A48694"/>
</dbReference>
<dbReference type="PDB" id="1LEM">
    <property type="method" value="X-ray"/>
    <property type="resolution" value="3.00 A"/>
    <property type="chains" value="A=31-211, B=218-269"/>
</dbReference>
<dbReference type="PDB" id="1LEN">
    <property type="method" value="X-ray"/>
    <property type="resolution" value="1.80 A"/>
    <property type="chains" value="A/C=31-211, B/D=218-269"/>
</dbReference>
<dbReference type="PDB" id="1LES">
    <property type="method" value="X-ray"/>
    <property type="resolution" value="1.90 A"/>
    <property type="chains" value="A/C=31-211, B/D=218-269"/>
</dbReference>
<dbReference type="PDB" id="2LAL">
    <property type="method" value="X-ray"/>
    <property type="resolution" value="1.80 A"/>
    <property type="chains" value="A/C=31-211, B/D=218-269"/>
</dbReference>
<dbReference type="PDBsum" id="1LEM"/>
<dbReference type="PDBsum" id="1LEN"/>
<dbReference type="PDBsum" id="1LES"/>
<dbReference type="PDBsum" id="2LAL"/>
<dbReference type="PCDDB" id="P02870"/>
<dbReference type="SMR" id="P02870"/>
<dbReference type="MINT" id="P02870"/>
<dbReference type="Allergome" id="8816">
    <property type="allergen name" value="Len c Agglutinin"/>
</dbReference>
<dbReference type="UniLectin" id="P02870"/>
<dbReference type="EvolutionaryTrace" id="P02870"/>
<dbReference type="GO" id="GO:0005509">
    <property type="term" value="F:calcium ion binding"/>
    <property type="evidence" value="ECO:0000314"/>
    <property type="project" value="UniProtKB"/>
</dbReference>
<dbReference type="GO" id="GO:0030246">
    <property type="term" value="F:carbohydrate binding"/>
    <property type="evidence" value="ECO:0000314"/>
    <property type="project" value="UniProtKB"/>
</dbReference>
<dbReference type="GO" id="GO:0005537">
    <property type="term" value="F:D-mannose binding"/>
    <property type="evidence" value="ECO:0007669"/>
    <property type="project" value="UniProtKB-KW"/>
</dbReference>
<dbReference type="GO" id="GO:0030145">
    <property type="term" value="F:manganese ion binding"/>
    <property type="evidence" value="ECO:0000314"/>
    <property type="project" value="UniProtKB"/>
</dbReference>
<dbReference type="GO" id="GO:0009756">
    <property type="term" value="P:carbohydrate mediated signaling"/>
    <property type="evidence" value="ECO:0000304"/>
    <property type="project" value="UniProtKB"/>
</dbReference>
<dbReference type="CDD" id="cd06899">
    <property type="entry name" value="lectin_legume_LecRK_Arcelin_ConA"/>
    <property type="match status" value="1"/>
</dbReference>
<dbReference type="FunFam" id="2.60.120.200:FF:000237">
    <property type="entry name" value="Mannose/glucose-specific lectin"/>
    <property type="match status" value="1"/>
</dbReference>
<dbReference type="Gene3D" id="2.60.120.200">
    <property type="match status" value="1"/>
</dbReference>
<dbReference type="InterPro" id="IPR013320">
    <property type="entry name" value="ConA-like_dom_sf"/>
</dbReference>
<dbReference type="InterPro" id="IPR016363">
    <property type="entry name" value="L-lectin"/>
</dbReference>
<dbReference type="InterPro" id="IPR000985">
    <property type="entry name" value="Lectin_LegA_CS"/>
</dbReference>
<dbReference type="InterPro" id="IPR019825">
    <property type="entry name" value="Lectin_legB_Mn/Ca_BS"/>
</dbReference>
<dbReference type="InterPro" id="IPR001220">
    <property type="entry name" value="Legume_lectin_dom"/>
</dbReference>
<dbReference type="InterPro" id="IPR050258">
    <property type="entry name" value="Leguminous_Lectin"/>
</dbReference>
<dbReference type="PANTHER" id="PTHR32401">
    <property type="entry name" value="CONCANAVALIN A-LIKE LECTIN FAMILY PROTEIN"/>
    <property type="match status" value="1"/>
</dbReference>
<dbReference type="PANTHER" id="PTHR32401:SF45">
    <property type="entry name" value="LECTIN"/>
    <property type="match status" value="1"/>
</dbReference>
<dbReference type="Pfam" id="PF00139">
    <property type="entry name" value="Lectin_legB"/>
    <property type="match status" value="1"/>
</dbReference>
<dbReference type="PIRSF" id="PIRSF002690">
    <property type="entry name" value="L-type_lectin_plant"/>
    <property type="match status" value="1"/>
</dbReference>
<dbReference type="SUPFAM" id="SSF49899">
    <property type="entry name" value="Concanavalin A-like lectins/glucanases"/>
    <property type="match status" value="1"/>
</dbReference>
<dbReference type="PROSITE" id="PS00308">
    <property type="entry name" value="LECTIN_LEGUME_ALPHA"/>
    <property type="match status" value="1"/>
</dbReference>
<dbReference type="PROSITE" id="PS00307">
    <property type="entry name" value="LECTIN_LEGUME_BETA"/>
    <property type="match status" value="1"/>
</dbReference>
<proteinExistence type="evidence at protein level"/>
<accession>P02870</accession>
<accession>Q4ZJ64</accession>
<accession>Q6QDC0</accession>
<sequence length="275" mass="30352">MASLQTQMISFYLIFLSILLTTIFFFKVNSTETTSFSITKFSPDQKNLIFQGDGYTTKGKLTLTKAVKSTVGRALYSTPIHIWDRDTGNVANFVTSFTFVIDAPSSYNVADEFTFFIAPVDTKPQTGGGYLGVFNSKEYDKTSQTVAVEFDTFYNAAWDPSNKERHIGIDVNSIKSVNTKSWNLQNGERANVVIAFNAATNVLTVTLTYPNSLEEENVTSYTLNEVVPLKDVVPEWVRIGFSATTGAEFAAHEVHSWSFHSELGGTSSSKQAADA</sequence>
<name>LEC_LENCU</name>
<comment type="function">
    <text evidence="1">D-mannose specific lectin.</text>
</comment>
<comment type="subunit">
    <text evidence="4 5 6">Heterotetramer of two alpha and two beta chains.</text>
</comment>
<comment type="PTM">
    <text evidence="4 5 6">The mature form consists of two chains, alpha and beta, produced by cleavage of the immature protein. These remain cleaved, yet fold together to form one subunit.</text>
</comment>
<comment type="miscellaneous">
    <text>Binds two manganese (or other transition metal) ions and two calcium ions per heterotetramer. The metal ions are essential for the saccharide-binding activity.</text>
</comment>
<comment type="similarity">
    <text evidence="7">Belongs to the leguminous lectin family.</text>
</comment>
<comment type="online information" name="Functional Glycomics Gateway - Glycan Binding">
    <link uri="https://www.functionalglycomics.org/glycan-array/1004579"/>
    <text>LcH</text>
</comment>
<protein>
    <recommendedName>
        <fullName>Lectin</fullName>
    </recommendedName>
    <component>
        <recommendedName>
            <fullName>Lectin beta chain</fullName>
        </recommendedName>
    </component>
    <component>
        <recommendedName>
            <fullName>Lectin alpha chain</fullName>
        </recommendedName>
    </component>
</protein>
<feature type="signal peptide" evidence="3">
    <location>
        <begin position="1"/>
        <end position="30"/>
    </location>
</feature>
<feature type="chain" id="PRO_0000017619" description="Lectin beta chain">
    <location>
        <begin position="31"/>
        <end position="210"/>
    </location>
</feature>
<feature type="propeptide" id="PRO_0000223477" evidence="2">
    <location>
        <begin position="211"/>
        <end position="217"/>
    </location>
</feature>
<feature type="chain" id="PRO_0000017620" description="Lectin alpha chain">
    <location>
        <begin position="218"/>
        <end position="269"/>
    </location>
</feature>
<feature type="propeptide" id="PRO_0000223478">
    <location>
        <begin position="270"/>
        <end position="275"/>
    </location>
</feature>
<feature type="binding site">
    <location>
        <position position="111"/>
    </location>
    <ligand>
        <name>D-glucose</name>
        <dbReference type="ChEBI" id="CHEBI:4167"/>
    </ligand>
</feature>
<feature type="binding site">
    <location>
        <position position="129"/>
    </location>
    <ligand>
        <name>D-glucose</name>
        <dbReference type="ChEBI" id="CHEBI:4167"/>
    </ligand>
</feature>
<feature type="binding site">
    <location>
        <position position="149"/>
    </location>
    <ligand>
        <name>Mn(2+)</name>
        <dbReference type="ChEBI" id="CHEBI:29035"/>
    </ligand>
</feature>
<feature type="binding site">
    <location>
        <position position="151"/>
    </location>
    <ligand>
        <name>Ca(2+)</name>
        <dbReference type="ChEBI" id="CHEBI:29108"/>
    </ligand>
</feature>
<feature type="binding site">
    <location>
        <position position="151"/>
    </location>
    <ligand>
        <name>Mn(2+)</name>
        <dbReference type="ChEBI" id="CHEBI:29035"/>
    </ligand>
</feature>
<feature type="binding site">
    <location>
        <position position="153"/>
    </location>
    <ligand>
        <name>Ca(2+)</name>
        <dbReference type="ChEBI" id="CHEBI:29108"/>
    </ligand>
</feature>
<feature type="binding site">
    <location>
        <position position="155"/>
    </location>
    <ligand>
        <name>Ca(2+)</name>
        <dbReference type="ChEBI" id="CHEBI:29108"/>
    </ligand>
</feature>
<feature type="binding site">
    <location>
        <position position="159"/>
    </location>
    <ligand>
        <name>Ca(2+)</name>
        <dbReference type="ChEBI" id="CHEBI:29108"/>
    </ligand>
</feature>
<feature type="binding site">
    <location>
        <position position="159"/>
    </location>
    <ligand>
        <name>Mn(2+)</name>
        <dbReference type="ChEBI" id="CHEBI:29035"/>
    </ligand>
</feature>
<feature type="binding site">
    <location>
        <position position="166"/>
    </location>
    <ligand>
        <name>Mn(2+)</name>
        <dbReference type="ChEBI" id="CHEBI:29035"/>
    </ligand>
</feature>
<feature type="binding site">
    <location>
        <position position="246"/>
    </location>
    <ligand>
        <name>D-glucose</name>
        <dbReference type="ChEBI" id="CHEBI:4167"/>
    </ligand>
</feature>
<feature type="binding site">
    <location>
        <position position="247"/>
    </location>
    <ligand>
        <name>D-glucose</name>
        <dbReference type="ChEBI" id="CHEBI:4167"/>
    </ligand>
</feature>
<feature type="site" description="Cleavage">
    <location>
        <begin position="210"/>
        <end position="211"/>
    </location>
</feature>
<feature type="site" description="Cleavage">
    <location>
        <begin position="217"/>
        <end position="218"/>
    </location>
</feature>
<feature type="sequence conflict" description="In Ref. 2; AA sequence." evidence="7" ref="2">
    <original>K</original>
    <variation>Q</variation>
    <location>
        <position position="46"/>
    </location>
</feature>
<feature type="sequence conflict" description="In Ref. 1; AAS55887." evidence="7" ref="1">
    <original>NLIFQGD</original>
    <variation>GGRGNSI</variation>
    <location>
        <begin position="47"/>
        <end position="53"/>
    </location>
</feature>
<feature type="sequence conflict" description="In Ref. 2; AA sequence." evidence="7" ref="2">
    <original>TKGK</original>
    <variation>GKEG</variation>
    <location>
        <begin position="57"/>
        <end position="60"/>
    </location>
</feature>
<feature type="sequence conflict" description="In Ref. 2; AA sequence." evidence="7" ref="2">
    <original>AVKSTV</original>
    <variation>VSKETG</variation>
    <location>
        <begin position="66"/>
        <end position="71"/>
    </location>
</feature>
<feature type="sequence conflict" description="In Ref. 2; AA sequence." evidence="7" ref="2">
    <original>G</original>
    <variation>V</variation>
    <location>
        <position position="88"/>
    </location>
</feature>
<feature type="sequence conflict" description="In Ref. 2; AA sequence." evidence="7" ref="2">
    <original>SFTFVIDAPSS</original>
    <variation>NGSQVFRESPNG</variation>
    <location>
        <begin position="96"/>
        <end position="106"/>
    </location>
</feature>
<feature type="sequence conflict" description="In Ref. 2; AA sequence." evidence="7" ref="2">
    <original>E</original>
    <variation>G</variation>
    <location>
        <position position="112"/>
    </location>
</feature>
<feature type="sequence conflict" description="In Ref. 2; AA sequence." evidence="7" ref="2">
    <original>NS</original>
    <variation>YNG</variation>
    <location>
        <begin position="135"/>
        <end position="136"/>
    </location>
</feature>
<feature type="sequence conflict" description="In Ref. 3; AA sequence." evidence="7" ref="3">
    <original>H</original>
    <variation>Q</variation>
    <location>
        <position position="252"/>
    </location>
</feature>
<feature type="sequence conflict" description="In Ref. 3; AA sequence." evidence="7" ref="3">
    <original>HSELGGTSS</original>
    <variation>NSQLGHTSK</variation>
    <location>
        <begin position="260"/>
        <end position="268"/>
    </location>
</feature>
<feature type="strand" evidence="9">
    <location>
        <begin position="32"/>
        <end position="41"/>
    </location>
</feature>
<feature type="strand" evidence="9">
    <location>
        <begin position="48"/>
        <end position="52"/>
    </location>
</feature>
<feature type="strand" evidence="9">
    <location>
        <begin position="55"/>
        <end position="57"/>
    </location>
</feature>
<feature type="strand" evidence="9">
    <location>
        <begin position="59"/>
        <end position="64"/>
    </location>
</feature>
<feature type="strand" evidence="9">
    <location>
        <begin position="71"/>
        <end position="78"/>
    </location>
</feature>
<feature type="turn" evidence="9">
    <location>
        <begin position="85"/>
        <end position="87"/>
    </location>
</feature>
<feature type="strand" evidence="9">
    <location>
        <begin position="92"/>
        <end position="102"/>
    </location>
</feature>
<feature type="strand" evidence="8">
    <location>
        <begin position="104"/>
        <end position="108"/>
    </location>
</feature>
<feature type="strand" evidence="9">
    <location>
        <begin position="112"/>
        <end position="119"/>
    </location>
</feature>
<feature type="helix" evidence="9">
    <location>
        <begin position="128"/>
        <end position="130"/>
    </location>
</feature>
<feature type="turn" evidence="9">
    <location>
        <begin position="131"/>
        <end position="133"/>
    </location>
</feature>
<feature type="turn" evidence="9">
    <location>
        <begin position="141"/>
        <end position="143"/>
    </location>
</feature>
<feature type="strand" evidence="9">
    <location>
        <begin position="146"/>
        <end position="151"/>
    </location>
</feature>
<feature type="turn" evidence="9">
    <location>
        <begin position="156"/>
        <end position="158"/>
    </location>
</feature>
<feature type="strand" evidence="9">
    <location>
        <begin position="166"/>
        <end position="175"/>
    </location>
</feature>
<feature type="strand" evidence="9">
    <location>
        <begin position="177"/>
        <end position="181"/>
    </location>
</feature>
<feature type="strand" evidence="9">
    <location>
        <begin position="189"/>
        <end position="197"/>
    </location>
</feature>
<feature type="turn" evidence="9">
    <location>
        <begin position="198"/>
        <end position="201"/>
    </location>
</feature>
<feature type="strand" evidence="9">
    <location>
        <begin position="202"/>
        <end position="209"/>
    </location>
</feature>
<feature type="strand" evidence="9">
    <location>
        <begin position="219"/>
        <end position="226"/>
    </location>
</feature>
<feature type="helix" evidence="9">
    <location>
        <begin position="229"/>
        <end position="232"/>
    </location>
</feature>
<feature type="strand" evidence="9">
    <location>
        <begin position="235"/>
        <end position="244"/>
    </location>
</feature>
<feature type="strand" evidence="10">
    <location>
        <begin position="246"/>
        <end position="248"/>
    </location>
</feature>
<feature type="strand" evidence="9">
    <location>
        <begin position="251"/>
        <end position="263"/>
    </location>
</feature>
<organism>
    <name type="scientific">Lens culinaris</name>
    <name type="common">Lentil</name>
    <name type="synonym">Cicer lens</name>
    <dbReference type="NCBI Taxonomy" id="3864"/>
    <lineage>
        <taxon>Eukaryota</taxon>
        <taxon>Viridiplantae</taxon>
        <taxon>Streptophyta</taxon>
        <taxon>Embryophyta</taxon>
        <taxon>Tracheophyta</taxon>
        <taxon>Spermatophyta</taxon>
        <taxon>Magnoliopsida</taxon>
        <taxon>eudicotyledons</taxon>
        <taxon>Gunneridae</taxon>
        <taxon>Pentapetalae</taxon>
        <taxon>rosids</taxon>
        <taxon>fabids</taxon>
        <taxon>Fabales</taxon>
        <taxon>Fabaceae</taxon>
        <taxon>Papilionoideae</taxon>
        <taxon>50 kb inversion clade</taxon>
        <taxon>NPAAA clade</taxon>
        <taxon>Hologalegina</taxon>
        <taxon>IRL clade</taxon>
        <taxon>Fabeae</taxon>
        <taxon>Lens</taxon>
    </lineage>
</organism>